<organism>
    <name type="scientific">Staphylococcus aureus (strain JH1)</name>
    <dbReference type="NCBI Taxonomy" id="359787"/>
    <lineage>
        <taxon>Bacteria</taxon>
        <taxon>Bacillati</taxon>
        <taxon>Bacillota</taxon>
        <taxon>Bacilli</taxon>
        <taxon>Bacillales</taxon>
        <taxon>Staphylococcaceae</taxon>
        <taxon>Staphylococcus</taxon>
    </lineage>
</organism>
<feature type="peptide" id="PRO_0000345044" description="Phenol-soluble modulin alpha 2 peptide">
    <location>
        <begin position="1"/>
        <end position="21"/>
    </location>
</feature>
<proteinExistence type="inferred from homology"/>
<sequence>MGIIAGIIKFIKGLIEKFTGK</sequence>
<evidence type="ECO:0000250" key="1">
    <source>
        <dbReference type="UniProtKB" id="A9JX06"/>
    </source>
</evidence>
<evidence type="ECO:0000305" key="2"/>
<reference key="1">
    <citation type="submission" date="2007-06" db="EMBL/GenBank/DDBJ databases">
        <title>Complete sequence of chromosome of Staphylococcus aureus subsp. aureus JH1.</title>
        <authorList>
            <consortium name="US DOE Joint Genome Institute"/>
            <person name="Copeland A."/>
            <person name="Lucas S."/>
            <person name="Lapidus A."/>
            <person name="Barry K."/>
            <person name="Detter J.C."/>
            <person name="Glavina del Rio T."/>
            <person name="Hammon N."/>
            <person name="Israni S."/>
            <person name="Dalin E."/>
            <person name="Tice H."/>
            <person name="Pitluck S."/>
            <person name="Chain P."/>
            <person name="Malfatti S."/>
            <person name="Shin M."/>
            <person name="Vergez L."/>
            <person name="Schmutz J."/>
            <person name="Larimer F."/>
            <person name="Land M."/>
            <person name="Hauser L."/>
            <person name="Kyrpides N."/>
            <person name="Ivanova N."/>
            <person name="Tomasz A."/>
            <person name="Richardson P."/>
        </authorList>
    </citation>
    <scope>NUCLEOTIDE SEQUENCE [LARGE SCALE GENOMIC DNA]</scope>
    <source>
        <strain>JH1</strain>
    </source>
</reference>
<dbReference type="EMBL" id="CP000736">
    <property type="status" value="NOT_ANNOTATED_CDS"/>
    <property type="molecule type" value="Genomic_DNA"/>
</dbReference>
<dbReference type="GO" id="GO:0031640">
    <property type="term" value="P:killing of cells of another organism"/>
    <property type="evidence" value="ECO:0007669"/>
    <property type="project" value="UniProtKB-KW"/>
</dbReference>
<dbReference type="InterPro" id="IPR031429">
    <property type="entry name" value="PSM_alpha"/>
</dbReference>
<dbReference type="NCBIfam" id="NF033425">
    <property type="entry name" value="PSM_alpha_1_2"/>
    <property type="match status" value="1"/>
</dbReference>
<dbReference type="Pfam" id="PF17063">
    <property type="entry name" value="PSMalpha"/>
    <property type="match status" value="1"/>
</dbReference>
<protein>
    <recommendedName>
        <fullName>Phenol-soluble modulin alpha 2 peptide</fullName>
    </recommendedName>
</protein>
<gene>
    <name type="primary">psmA2</name>
    <name type="ordered locus">SaurJH1_0486.3</name>
</gene>
<name>PSMA2_STAA2</name>
<keyword id="KW-0204">Cytolysis</keyword>
<keyword id="KW-0843">Virulence</keyword>
<comment type="function">
    <text evidence="1">Peptide which can recruit, activate and subsequently lyse human neutrophils, thus eliminating the main cellular defense against infection.</text>
</comment>
<comment type="similarity">
    <text evidence="2">Belongs to the phenol-soluble modulin alpha peptides family.</text>
</comment>
<accession>P0C7Z1</accession>